<name>PGLD_CAMJE</name>
<protein>
    <recommendedName>
        <fullName>UDP-N-acetylbacillosamine N-acetyltransferase</fullName>
        <ecNumber>2.3.1.203</ecNumber>
    </recommendedName>
    <alternativeName>
        <fullName>Protein glycosylation D</fullName>
    </alternativeName>
    <alternativeName>
        <fullName>UDP-4-amino-4,6-dideoxy-N-acetyl-alpha-D-glucosamine N-acetyltransferase</fullName>
    </alternativeName>
</protein>
<gene>
    <name type="primary">pglD</name>
    <name type="ordered locus">Cj1123c</name>
</gene>
<keyword id="KW-0002">3D-structure</keyword>
<keyword id="KW-0012">Acyltransferase</keyword>
<keyword id="KW-1185">Reference proteome</keyword>
<keyword id="KW-0808">Transferase</keyword>
<accession>Q0P9D1</accession>
<feature type="chain" id="PRO_0000422585" description="UDP-N-acetylbacillosamine N-acetyltransferase">
    <location>
        <begin position="1"/>
        <end position="195"/>
    </location>
</feature>
<feature type="active site" description="Proton acceptor" evidence="3">
    <location>
        <position position="125"/>
    </location>
</feature>
<feature type="binding site">
    <location>
        <begin position="13"/>
        <end position="15"/>
    </location>
    <ligand>
        <name>substrate</name>
    </ligand>
</feature>
<feature type="binding site">
    <location>
        <begin position="35"/>
        <end position="36"/>
    </location>
    <ligand>
        <name>substrate</name>
    </ligand>
</feature>
<feature type="binding site">
    <location>
        <position position="56"/>
    </location>
    <ligand>
        <name>substrate</name>
    </ligand>
</feature>
<feature type="binding site" evidence="3">
    <location>
        <position position="134"/>
    </location>
    <ligand>
        <name>acetyl-CoA</name>
        <dbReference type="ChEBI" id="CHEBI:57288"/>
    </ligand>
</feature>
<feature type="binding site" evidence="3">
    <location>
        <position position="155"/>
    </location>
    <ligand>
        <name>acetyl-CoA</name>
        <dbReference type="ChEBI" id="CHEBI:57288"/>
    </ligand>
</feature>
<feature type="binding site" evidence="3">
    <location>
        <position position="173"/>
    </location>
    <ligand>
        <name>acetyl-CoA</name>
        <dbReference type="ChEBI" id="CHEBI:57288"/>
    </ligand>
</feature>
<feature type="site" description="Increases basicity of active site His">
    <location>
        <position position="126"/>
    </location>
</feature>
<feature type="mutagenesis site" description="Induces a higher KM and approximate 3-fold decrease in the turnover number." evidence="3">
    <original>H</original>
    <variation>A</variation>
    <location>
        <position position="15"/>
    </location>
</feature>
<feature type="mutagenesis site" description="Reduction in catalytic activity." evidence="2">
    <original>N</original>
    <variation>A</variation>
    <location>
        <position position="118"/>
    </location>
</feature>
<feature type="mutagenesis site" description="Reduction in catalytic activity." evidence="2">
    <original>E</original>
    <variation>A</variation>
    <location>
        <position position="124"/>
    </location>
</feature>
<feature type="mutagenesis site" description="Strong reduction in catalytic activity." evidence="2 3">
    <original>H</original>
    <variation>A</variation>
    <location>
        <position position="125"/>
    </location>
</feature>
<feature type="mutagenesis site" description="Slight reduction in catalytic activity." evidence="2 3">
    <original>H</original>
    <variation>A</variation>
    <location>
        <position position="134"/>
    </location>
</feature>
<feature type="strand" evidence="8">
    <location>
        <begin position="5"/>
        <end position="10"/>
    </location>
</feature>
<feature type="helix" evidence="8">
    <location>
        <begin position="15"/>
        <end position="26"/>
    </location>
</feature>
<feature type="strand" evidence="8">
    <location>
        <begin position="29"/>
        <end position="34"/>
    </location>
</feature>
<feature type="turn" evidence="7">
    <location>
        <begin position="36"/>
        <end position="38"/>
    </location>
</feature>
<feature type="helix" evidence="10">
    <location>
        <begin position="40"/>
        <end position="45"/>
    </location>
</feature>
<feature type="strand" evidence="8">
    <location>
        <begin position="50"/>
        <end position="53"/>
    </location>
</feature>
<feature type="helix" evidence="8">
    <location>
        <begin position="58"/>
        <end position="69"/>
    </location>
</feature>
<feature type="turn" evidence="8">
    <location>
        <begin position="70"/>
        <end position="72"/>
    </location>
</feature>
<feature type="strand" evidence="10">
    <location>
        <begin position="89"/>
        <end position="91"/>
    </location>
</feature>
<feature type="strand" evidence="9">
    <location>
        <begin position="181"/>
        <end position="183"/>
    </location>
</feature>
<feature type="strand" evidence="7">
    <location>
        <begin position="186"/>
        <end position="188"/>
    </location>
</feature>
<feature type="turn" evidence="7">
    <location>
        <begin position="189"/>
        <end position="192"/>
    </location>
</feature>
<organism>
    <name type="scientific">Campylobacter jejuni subsp. jejuni serotype O:2 (strain ATCC 700819 / NCTC 11168)</name>
    <dbReference type="NCBI Taxonomy" id="192222"/>
    <lineage>
        <taxon>Bacteria</taxon>
        <taxon>Pseudomonadati</taxon>
        <taxon>Campylobacterota</taxon>
        <taxon>Epsilonproteobacteria</taxon>
        <taxon>Campylobacterales</taxon>
        <taxon>Campylobacteraceae</taxon>
        <taxon>Campylobacter</taxon>
    </lineage>
</organism>
<comment type="function">
    <text evidence="1 4">Acetyltransferase that modifies the UDP-4-amino-sugar to form UDP-N,N'-diacetylbacillosamine in the N-linked protein glycosylation pathway.</text>
</comment>
<comment type="catalytic activity">
    <reaction evidence="1">
        <text>UDP-N-acetylbacillosamine + acetyl-CoA = UDP-N,N'-diacetylbacillosamine + CoA + H(+)</text>
        <dbReference type="Rhea" id="RHEA:34159"/>
        <dbReference type="ChEBI" id="CHEBI:15378"/>
        <dbReference type="ChEBI" id="CHEBI:57287"/>
        <dbReference type="ChEBI" id="CHEBI:57288"/>
        <dbReference type="ChEBI" id="CHEBI:63277"/>
        <dbReference type="ChEBI" id="CHEBI:67134"/>
        <dbReference type="EC" id="2.3.1.203"/>
    </reaction>
</comment>
<comment type="biophysicochemical properties">
    <kinetics>
        <KM evidence="1 3">1 mM for UDP-N-acetylbacillosamine</KM>
        <KM evidence="1">0.41 mM for UDP-N-acetylbacillosamine</KM>
        <Vmax evidence="1 3">14700.0 nmol/sec/mg enzyme</Vmax>
        <text evidence="1 3">kcat is 483000 min(-1) (PubMed:17087520). kcat is 314 sec(-1) (PubMed:18667421).</text>
    </kinetics>
</comment>
<comment type="pathway">
    <text evidence="1">Protein modification; protein glycosylation.</text>
</comment>
<comment type="subunit">
    <text evidence="2 3">Homotrimer.</text>
</comment>
<comment type="miscellaneous">
    <text evidence="6">N-linked protein glycosylation in C.jejuni consists in the transfer of a heptasaccharide (GalNAc-alpha1,4-GalNAc-alpha1,4-(Glcbeta1,3)-GalNAc-alpha1,4-GalNAc-alpha1,4-GalNAc-alpha1,3-bacillosamine) from a membrane-anchored undecaprenylpyrophosphate (Und-PP)-linked donor to the Asn side chain of proteins at the Asn-X-Ser/Thr motif.</text>
</comment>
<comment type="similarity">
    <text evidence="5">Belongs to the transferase hexapeptide repeat family.</text>
</comment>
<reference key="1">
    <citation type="journal article" date="2000" name="Nature">
        <title>The genome sequence of the food-borne pathogen Campylobacter jejuni reveals hypervariable sequences.</title>
        <authorList>
            <person name="Parkhill J."/>
            <person name="Wren B.W."/>
            <person name="Mungall K.L."/>
            <person name="Ketley J.M."/>
            <person name="Churcher C.M."/>
            <person name="Basham D."/>
            <person name="Chillingworth T."/>
            <person name="Davies R.M."/>
            <person name="Feltwell T."/>
            <person name="Holroyd S."/>
            <person name="Jagels K."/>
            <person name="Karlyshev A.V."/>
            <person name="Moule S."/>
            <person name="Pallen M.J."/>
            <person name="Penn C.W."/>
            <person name="Quail M.A."/>
            <person name="Rajandream M.A."/>
            <person name="Rutherford K.M."/>
            <person name="van Vliet A.H.M."/>
            <person name="Whitehead S."/>
            <person name="Barrell B.G."/>
        </authorList>
    </citation>
    <scope>NUCLEOTIDE SEQUENCE [LARGE SCALE GENOMIC DNA]</scope>
    <source>
        <strain>ATCC 700819 / NCTC 11168</strain>
    </source>
</reference>
<reference key="2">
    <citation type="journal article" date="2006" name="Biochemistry">
        <title>In vitro biosynthesis of UDP-N,N'-diacetylbacillosamine by enzymes of the Campylobacter jejuni general protein glycosylation system.</title>
        <authorList>
            <person name="Olivier N.B."/>
            <person name="Chen M.M."/>
            <person name="Behr J.R."/>
            <person name="Imperiali B."/>
        </authorList>
    </citation>
    <scope>FUNCTION</scope>
    <scope>CATALYTIC ACTIVITY</scope>
    <scope>BIOPHYSICOCHEMICAL PROPERTIES</scope>
    <scope>PATHWAY</scope>
    <source>
        <strain>ATCC 700819 / NCTC 11168</strain>
    </source>
</reference>
<reference key="3">
    <citation type="journal article" date="2009" name="Biochem. Cell Biol.">
        <title>Cj1123c (PglD), a multifaceted acetyltransferase from Campylobacter jejuni.</title>
        <authorList>
            <person name="Demendi M."/>
            <person name="Creuzenet C."/>
        </authorList>
    </citation>
    <scope>FUNCTION</scope>
    <source>
        <strain>ATCC 700819 / NCTC 11168</strain>
    </source>
</reference>
<reference key="4">
    <citation type="submission" date="2006-10" db="PDB data bank">
        <title>Crystal structure of putative transferase from Campylobacter jejuni subsp. jejuni NCTC 11168.</title>
        <authorList>
            <person name="Jin X."/>
            <person name="Bera A."/>
            <person name="Wasserman S."/>
            <person name="Smith D."/>
            <person name="Sauder J.M."/>
            <person name="Burley S.K."/>
            <person name="Shapiro L."/>
        </authorList>
    </citation>
    <scope>X-RAY CRYSTALLOGRAPHY (2.20 ANGSTROMS) OF 2-195</scope>
</reference>
<reference key="5">
    <citation type="journal article" date="2008" name="Biochemistry">
        <title>Structure and active site residues of PglD, an N-acetyltransferase from the bacillosamine synthetic pathway required for N-glycan synthesis in Campylobacter jejuni.</title>
        <authorList>
            <person name="Rangarajan E.S."/>
            <person name="Ruane K.M."/>
            <person name="Sulea T."/>
            <person name="Watson D.C."/>
            <person name="Proteau A."/>
            <person name="Leclerc S."/>
            <person name="Cygler M."/>
            <person name="Matte A."/>
            <person name="Young N.M."/>
        </authorList>
    </citation>
    <scope>X-RAY CRYSTALLOGRAPHY (1.75 ANGSTROMS) OF 2-195 IN COMPLEX WITH COENZYME A</scope>
    <scope>SUBUNIT</scope>
    <scope>MUTAGENESIS OF ASN-118; GLU-124; HIS-125 AND HIS-134</scope>
    <source>
        <strain>ATCC 700819 / NCTC 11168</strain>
    </source>
</reference>
<reference key="6">
    <citation type="journal article" date="2008" name="J. Biol. Chem.">
        <title>Crystal structure and catalytic mechanism of PglD from Campylobacter jejuni.</title>
        <authorList>
            <person name="Olivier N.B."/>
            <person name="Imperiali B."/>
        </authorList>
    </citation>
    <scope>X-RAY CRYSTALLOGRAPHY (1.77 ANGSTROMS) IN COMPLEX WITH UDP-4-AMINO-SUGAR AND ACETYL-COA</scope>
    <scope>SUBUNIT</scope>
    <scope>MUTAGENESIS OF HIS-15; HIS-125 AND HIS-134</scope>
    <scope>REACTION MECHANISM</scope>
    <scope>ACTIVE SITE</scope>
    <scope>SITE</scope>
    <source>
        <strain>ATCC 700819 / NCTC 11168</strain>
    </source>
</reference>
<dbReference type="EC" id="2.3.1.203"/>
<dbReference type="EMBL" id="AL111168">
    <property type="protein sequence ID" value="CAL35240.1"/>
    <property type="molecule type" value="Genomic_DNA"/>
</dbReference>
<dbReference type="PIR" id="F81316">
    <property type="entry name" value="F81316"/>
</dbReference>
<dbReference type="RefSeq" id="WP_002852865.1">
    <property type="nucleotide sequence ID" value="NZ_SZUC01000001.1"/>
</dbReference>
<dbReference type="RefSeq" id="YP_002344516.1">
    <property type="nucleotide sequence ID" value="NC_002163.1"/>
</dbReference>
<dbReference type="PDB" id="2NPO">
    <property type="method" value="X-ray"/>
    <property type="resolution" value="2.20 A"/>
    <property type="chains" value="A=2-195"/>
</dbReference>
<dbReference type="PDB" id="2VHE">
    <property type="method" value="X-ray"/>
    <property type="resolution" value="1.80 A"/>
    <property type="chains" value="A/B=2-195"/>
</dbReference>
<dbReference type="PDB" id="3BFP">
    <property type="method" value="X-ray"/>
    <property type="resolution" value="1.75 A"/>
    <property type="chains" value="A=2-195"/>
</dbReference>
<dbReference type="PDB" id="3BSS">
    <property type="method" value="X-ray"/>
    <property type="resolution" value="2.30 A"/>
    <property type="chains" value="A=1-195"/>
</dbReference>
<dbReference type="PDB" id="3BSW">
    <property type="method" value="X-ray"/>
    <property type="resolution" value="1.77 A"/>
    <property type="chains" value="A=1-195"/>
</dbReference>
<dbReference type="PDB" id="3BSY">
    <property type="method" value="X-ray"/>
    <property type="resolution" value="1.80 A"/>
    <property type="chains" value="A/B/C=1-195"/>
</dbReference>
<dbReference type="PDB" id="5T2Y">
    <property type="method" value="X-ray"/>
    <property type="resolution" value="1.94 A"/>
    <property type="chains" value="A/B=1-195"/>
</dbReference>
<dbReference type="PDB" id="5TYH">
    <property type="method" value="X-ray"/>
    <property type="resolution" value="2.10 A"/>
    <property type="chains" value="A=1-195"/>
</dbReference>
<dbReference type="PDBsum" id="2NPO"/>
<dbReference type="PDBsum" id="2VHE"/>
<dbReference type="PDBsum" id="3BFP"/>
<dbReference type="PDBsum" id="3BSS"/>
<dbReference type="PDBsum" id="3BSW"/>
<dbReference type="PDBsum" id="3BSY"/>
<dbReference type="PDBsum" id="5T2Y"/>
<dbReference type="PDBsum" id="5TYH"/>
<dbReference type="SMR" id="Q0P9D1"/>
<dbReference type="IntAct" id="Q0P9D1">
    <property type="interactions" value="3"/>
</dbReference>
<dbReference type="STRING" id="192222.Cj1123c"/>
<dbReference type="BindingDB" id="Q0P9D1"/>
<dbReference type="ChEMBL" id="CHEMBL4105798"/>
<dbReference type="PaxDb" id="192222-Cj1123c"/>
<dbReference type="EnsemblBacteria" id="CAL35240">
    <property type="protein sequence ID" value="CAL35240"/>
    <property type="gene ID" value="Cj1123c"/>
</dbReference>
<dbReference type="GeneID" id="905414"/>
<dbReference type="KEGG" id="cje:Cj1123c"/>
<dbReference type="PATRIC" id="fig|192222.6.peg.1105"/>
<dbReference type="eggNOG" id="COG0110">
    <property type="taxonomic scope" value="Bacteria"/>
</dbReference>
<dbReference type="HOGENOM" id="CLU_081811_2_3_7"/>
<dbReference type="OrthoDB" id="9801456at2"/>
<dbReference type="BioCyc" id="MetaCyc:MONOMER-17320"/>
<dbReference type="BRENDA" id="2.3.1.203">
    <property type="organism ID" value="1087"/>
</dbReference>
<dbReference type="UniPathway" id="UPA00378"/>
<dbReference type="EvolutionaryTrace" id="Q0P9D1"/>
<dbReference type="Proteomes" id="UP000000799">
    <property type="component" value="Chromosome"/>
</dbReference>
<dbReference type="GO" id="GO:0016747">
    <property type="term" value="F:acyltransferase activity, transferring groups other than amino-acyl groups"/>
    <property type="evidence" value="ECO:0000314"/>
    <property type="project" value="UniProtKB"/>
</dbReference>
<dbReference type="GO" id="GO:0018279">
    <property type="term" value="P:protein N-linked glycosylation via asparagine"/>
    <property type="evidence" value="ECO:0000314"/>
    <property type="project" value="UniProtKB"/>
</dbReference>
<dbReference type="CDD" id="cd03360">
    <property type="entry name" value="LbH_AT_putative"/>
    <property type="match status" value="1"/>
</dbReference>
<dbReference type="Gene3D" id="3.40.50.20">
    <property type="match status" value="1"/>
</dbReference>
<dbReference type="Gene3D" id="2.160.10.10">
    <property type="entry name" value="Hexapeptide repeat proteins"/>
    <property type="match status" value="1"/>
</dbReference>
<dbReference type="InterPro" id="IPR020019">
    <property type="entry name" value="AcTrfase_PglD-like"/>
</dbReference>
<dbReference type="InterPro" id="IPR041561">
    <property type="entry name" value="PglD_N"/>
</dbReference>
<dbReference type="InterPro" id="IPR050179">
    <property type="entry name" value="Trans_hexapeptide_repeat"/>
</dbReference>
<dbReference type="InterPro" id="IPR011004">
    <property type="entry name" value="Trimer_LpxA-like_sf"/>
</dbReference>
<dbReference type="NCBIfam" id="TIGR03570">
    <property type="entry name" value="NeuD_NnaD"/>
    <property type="match status" value="1"/>
</dbReference>
<dbReference type="PANTHER" id="PTHR43300">
    <property type="entry name" value="ACETYLTRANSFERASE"/>
    <property type="match status" value="1"/>
</dbReference>
<dbReference type="PANTHER" id="PTHR43300:SF7">
    <property type="entry name" value="UDP-N-ACETYLBACILLOSAMINE N-ACETYLTRANSFERASE"/>
    <property type="match status" value="1"/>
</dbReference>
<dbReference type="Pfam" id="PF17836">
    <property type="entry name" value="PglD_N"/>
    <property type="match status" value="1"/>
</dbReference>
<dbReference type="SUPFAM" id="SSF51161">
    <property type="entry name" value="Trimeric LpxA-like enzymes"/>
    <property type="match status" value="1"/>
</dbReference>
<evidence type="ECO:0000269" key="1">
    <source>
    </source>
</evidence>
<evidence type="ECO:0000269" key="2">
    <source>
    </source>
</evidence>
<evidence type="ECO:0000269" key="3">
    <source>
    </source>
</evidence>
<evidence type="ECO:0000269" key="4">
    <source>
    </source>
</evidence>
<evidence type="ECO:0000305" key="5"/>
<evidence type="ECO:0000305" key="6">
    <source>
    </source>
</evidence>
<evidence type="ECO:0007829" key="7">
    <source>
        <dbReference type="PDB" id="2VHE"/>
    </source>
</evidence>
<evidence type="ECO:0007829" key="8">
    <source>
        <dbReference type="PDB" id="3BFP"/>
    </source>
</evidence>
<evidence type="ECO:0007829" key="9">
    <source>
        <dbReference type="PDB" id="3BSS"/>
    </source>
</evidence>
<evidence type="ECO:0007829" key="10">
    <source>
        <dbReference type="PDB" id="3BSW"/>
    </source>
</evidence>
<sequence>MARTEKIYIYGASGHGLVCEDVAKNMGYKECIFLDDFKGMKFESTLPKYDFFIAIGNNEIRKKIYQKISENGFKIVNLIHKSALISPSAIVEENAGILIMPYVVINAKAKIEKGVILNTSSVIEHECVIGEFSHVSVGAKCAGNVKIGKNCFLGINSCVLPNLSLADDSILGGGATLVKNQDEKGVFVGVPAKRM</sequence>
<proteinExistence type="evidence at protein level"/>